<organism>
    <name type="scientific">Arabidopsis thaliana</name>
    <name type="common">Mouse-ear cress</name>
    <dbReference type="NCBI Taxonomy" id="3702"/>
    <lineage>
        <taxon>Eukaryota</taxon>
        <taxon>Viridiplantae</taxon>
        <taxon>Streptophyta</taxon>
        <taxon>Embryophyta</taxon>
        <taxon>Tracheophyta</taxon>
        <taxon>Spermatophyta</taxon>
        <taxon>Magnoliopsida</taxon>
        <taxon>eudicotyledons</taxon>
        <taxon>Gunneridae</taxon>
        <taxon>Pentapetalae</taxon>
        <taxon>rosids</taxon>
        <taxon>malvids</taxon>
        <taxon>Brassicales</taxon>
        <taxon>Brassicaceae</taxon>
        <taxon>Camelineae</taxon>
        <taxon>Arabidopsis</taxon>
    </lineage>
</organism>
<evidence type="ECO:0000250" key="1">
    <source>
        <dbReference type="UniProtKB" id="P32802"/>
    </source>
</evidence>
<evidence type="ECO:0000250" key="2">
    <source>
        <dbReference type="UniProtKB" id="Q940G0"/>
    </source>
</evidence>
<evidence type="ECO:0000255" key="3"/>
<evidence type="ECO:0000303" key="4">
    <source>
    </source>
</evidence>
<evidence type="ECO:0000303" key="5">
    <source>
    </source>
</evidence>
<evidence type="ECO:0000305" key="6"/>
<evidence type="ECO:0000312" key="7">
    <source>
        <dbReference type="Araport" id="AT5G25100"/>
    </source>
</evidence>
<evidence type="ECO:0000312" key="8">
    <source>
        <dbReference type="EMBL" id="AC005964"/>
    </source>
</evidence>
<sequence length="644" mass="74120">MEFYRSSRRLQILGSVILLLSIHVAHSFYLPGVAPQDFEKGDELKVKVNKLTSIKTQLPYSYYSLPFCRPKKIVDSTENLGEVLRGDRIENAPYSFKMREAQMCNVLGRVMLDAKSAKAFKEKIDDEYRVNMILDNLPLVVPIERIDPGQGSPSVVYQLGYHVGLKGQYEGSKEQKYFMHNHLAFTVRYHRDMQTDAARIVGFEVKPYSVKHEYEGQWSEKTRLTTCDPHTKRLVVSSATPQEVENKKEIIFTYDVDFQESEVKWASRWDAYLLMSDNQIHWFSIVNSLMIVLFLSGMVAMIMLRTLYRDISRYNELETQEEAQEETGWKLVHGDVFRPPANSDLLCVYVGTGVQCLGMVLVTMIFAMLGFLSPSNRGGLMTAMLLLWVFMGLFAGYASSRLYKMFKGTEWKRIAFRTAFLFPAVVSAIFFVLNALIWGQKSSGAVPFGTMFALIFLWFGISVPLVFVGAYLGFKKPPLDDPVKTNKIPRQIPEQAWYMNPIFSILIGGILPFGAVFIELFFILTSIWLNQFYYIFGFLFLVFVILMVTCAEITIVLCYFQLCSEDYLWWWRSYLTSGSSAVYLFLYAAFYFFTKLQITKLVSAMLYFGYMLIASYAFFVLTGTIGFYACLWFTRLIYSSVKID</sequence>
<dbReference type="EMBL" id="AC005964">
    <property type="status" value="NOT_ANNOTATED_CDS"/>
    <property type="molecule type" value="Genomic_DNA"/>
</dbReference>
<dbReference type="EMBL" id="CP002688">
    <property type="protein sequence ID" value="AED93399.1"/>
    <property type="molecule type" value="Genomic_DNA"/>
</dbReference>
<dbReference type="EMBL" id="AF360135">
    <property type="protein sequence ID" value="AAK25845.1"/>
    <property type="molecule type" value="mRNA"/>
</dbReference>
<dbReference type="RefSeq" id="NP_568465.1">
    <molecule id="Q9C5N2-1"/>
    <property type="nucleotide sequence ID" value="NM_122419.4"/>
</dbReference>
<dbReference type="SMR" id="Q9C5N2"/>
<dbReference type="BioGRID" id="17856">
    <property type="interactions" value="3"/>
</dbReference>
<dbReference type="FunCoup" id="Q9C5N2">
    <property type="interactions" value="5269"/>
</dbReference>
<dbReference type="STRING" id="3702.Q9C5N2"/>
<dbReference type="iPTMnet" id="Q9C5N2"/>
<dbReference type="SwissPalm" id="Q9C5N2"/>
<dbReference type="PaxDb" id="3702-AT5G25100.2"/>
<dbReference type="EnsemblPlants" id="AT5G25100.1">
    <molecule id="Q9C5N2-1"/>
    <property type="protein sequence ID" value="AT5G25100.1"/>
    <property type="gene ID" value="AT5G25100"/>
</dbReference>
<dbReference type="GeneID" id="832581"/>
<dbReference type="Gramene" id="AT5G25100.1">
    <molecule id="Q9C5N2-1"/>
    <property type="protein sequence ID" value="AT5G25100.1"/>
    <property type="gene ID" value="AT5G25100"/>
</dbReference>
<dbReference type="KEGG" id="ath:AT5G25100"/>
<dbReference type="Araport" id="AT5G25100"/>
<dbReference type="TAIR" id="AT5G25100">
    <property type="gene designation" value="TMN9"/>
</dbReference>
<dbReference type="eggNOG" id="KOG1278">
    <property type="taxonomic scope" value="Eukaryota"/>
</dbReference>
<dbReference type="HOGENOM" id="CLU_010714_4_1_1"/>
<dbReference type="InParanoid" id="Q9C5N2"/>
<dbReference type="OMA" id="HEYEGNW"/>
<dbReference type="OrthoDB" id="1666796at2759"/>
<dbReference type="PhylomeDB" id="Q9C5N2"/>
<dbReference type="CD-CODE" id="4299E36E">
    <property type="entry name" value="Nucleolus"/>
</dbReference>
<dbReference type="PRO" id="PR:Q9C5N2"/>
<dbReference type="Proteomes" id="UP000006548">
    <property type="component" value="Chromosome 5"/>
</dbReference>
<dbReference type="ExpressionAtlas" id="Q9C5N2">
    <property type="expression patterns" value="baseline and differential"/>
</dbReference>
<dbReference type="GO" id="GO:0010008">
    <property type="term" value="C:endosome membrane"/>
    <property type="evidence" value="ECO:0007669"/>
    <property type="project" value="UniProtKB-SubCell"/>
</dbReference>
<dbReference type="GO" id="GO:0000139">
    <property type="term" value="C:Golgi membrane"/>
    <property type="evidence" value="ECO:0007669"/>
    <property type="project" value="UniProtKB-SubCell"/>
</dbReference>
<dbReference type="InterPro" id="IPR004240">
    <property type="entry name" value="EMP70"/>
</dbReference>
<dbReference type="InterPro" id="IPR036259">
    <property type="entry name" value="MFS_trans_sf"/>
</dbReference>
<dbReference type="PANTHER" id="PTHR10766:SF110">
    <property type="entry name" value="TRANSMEMBRANE 9 SUPERFAMILY MEMBER 8-RELATED"/>
    <property type="match status" value="1"/>
</dbReference>
<dbReference type="PANTHER" id="PTHR10766">
    <property type="entry name" value="TRANSMEMBRANE 9 SUPERFAMILY PROTEIN"/>
    <property type="match status" value="1"/>
</dbReference>
<dbReference type="Pfam" id="PF02990">
    <property type="entry name" value="EMP70"/>
    <property type="match status" value="1"/>
</dbReference>
<dbReference type="SUPFAM" id="SSF103473">
    <property type="entry name" value="MFS general substrate transporter"/>
    <property type="match status" value="1"/>
</dbReference>
<proteinExistence type="evidence at transcript level"/>
<keyword id="KW-0025">Alternative splicing</keyword>
<keyword id="KW-0967">Endosome</keyword>
<keyword id="KW-0333">Golgi apparatus</keyword>
<keyword id="KW-0472">Membrane</keyword>
<keyword id="KW-1185">Reference proteome</keyword>
<keyword id="KW-0732">Signal</keyword>
<keyword id="KW-0812">Transmembrane</keyword>
<keyword id="KW-1133">Transmembrane helix</keyword>
<accession>Q9C5N2</accession>
<name>TMN9_ARATH</name>
<comment type="subcellular location">
    <subcellularLocation>
        <location evidence="1">Endosome membrane</location>
        <topology evidence="3">Multi-pass membrane protein</topology>
    </subcellularLocation>
    <subcellularLocation>
        <location evidence="2">Golgi apparatus membrane</location>
        <topology evidence="3">Multi-pass membrane protein</topology>
    </subcellularLocation>
</comment>
<comment type="alternative products">
    <event type="alternative splicing"/>
    <isoform>
        <id>Q9C5N2-1</id>
        <name>1</name>
        <sequence type="displayed"/>
    </isoform>
    <text>A number of isoforms are produced. According to EST sequences.</text>
</comment>
<comment type="domain">
    <text evidence="2">The C-terminal KXD/E motif functions as a Golgi retention signal, certainly through the binding to the COP1 coatomer.</text>
</comment>
<comment type="similarity">
    <text>Belongs to the nonaspanin (TM9SF) (TC 9.A.2) family.</text>
</comment>
<protein>
    <recommendedName>
        <fullName evidence="6">Transmembrane 9 superfamily member 9</fullName>
    </recommendedName>
    <alternativeName>
        <fullName evidence="5">Endomembrane protein 2</fullName>
    </alternativeName>
    <alternativeName>
        <fullName evidence="4">Transmembrane nine protein 9</fullName>
        <shortName evidence="4">AtTMN9</shortName>
    </alternativeName>
</protein>
<gene>
    <name evidence="4" type="primary">TMN9</name>
    <name evidence="5" type="synonym">EMP2</name>
    <name evidence="7" type="ordered locus">At5g25100</name>
    <name evidence="8" type="ORF">T11H3_110</name>
</gene>
<feature type="signal peptide" evidence="3">
    <location>
        <begin position="1"/>
        <end position="27"/>
    </location>
</feature>
<feature type="chain" id="PRO_0000431266" description="Transmembrane 9 superfamily member 9" evidence="3">
    <location>
        <begin position="28"/>
        <end position="644"/>
    </location>
</feature>
<feature type="topological domain" description="Lumenal" evidence="6">
    <location>
        <begin position="28"/>
        <end position="281"/>
    </location>
</feature>
<feature type="transmembrane region" description="Helical; Name=1" evidence="3">
    <location>
        <begin position="282"/>
        <end position="302"/>
    </location>
</feature>
<feature type="topological domain" description="Cytoplasmic" evidence="6">
    <location>
        <begin position="303"/>
        <end position="351"/>
    </location>
</feature>
<feature type="transmembrane region" description="Helical; Name=2" evidence="3">
    <location>
        <begin position="352"/>
        <end position="372"/>
    </location>
</feature>
<feature type="topological domain" description="Lumenal" evidence="6">
    <location>
        <begin position="373"/>
        <end position="377"/>
    </location>
</feature>
<feature type="transmembrane region" description="Helical; Name=3" evidence="3">
    <location>
        <begin position="378"/>
        <end position="398"/>
    </location>
</feature>
<feature type="topological domain" description="Cytoplasmic" evidence="6">
    <location>
        <begin position="399"/>
        <end position="418"/>
    </location>
</feature>
<feature type="transmembrane region" description="Helical; Name=4" evidence="3">
    <location>
        <begin position="419"/>
        <end position="439"/>
    </location>
</feature>
<feature type="topological domain" description="Lumenal" evidence="6">
    <location>
        <begin position="440"/>
        <end position="451"/>
    </location>
</feature>
<feature type="transmembrane region" description="Helical; Name=5" evidence="3">
    <location>
        <begin position="452"/>
        <end position="472"/>
    </location>
</feature>
<feature type="topological domain" description="Cytoplasmic" evidence="6">
    <location>
        <begin position="473"/>
        <end position="501"/>
    </location>
</feature>
<feature type="transmembrane region" description="Helical; Name=6" evidence="3">
    <location>
        <begin position="502"/>
        <end position="522"/>
    </location>
</feature>
<feature type="topological domain" description="Lumenal" evidence="6">
    <location>
        <begin position="523"/>
        <end position="534"/>
    </location>
</feature>
<feature type="transmembrane region" description="Helical; Name=7" evidence="3">
    <location>
        <begin position="535"/>
        <end position="555"/>
    </location>
</feature>
<feature type="topological domain" description="Cytoplasmic" evidence="6">
    <location>
        <begin position="556"/>
        <end position="573"/>
    </location>
</feature>
<feature type="transmembrane region" description="Helical; Name=8" evidence="3">
    <location>
        <begin position="574"/>
        <end position="594"/>
    </location>
</feature>
<feature type="topological domain" description="Lumenal" evidence="6">
    <location>
        <begin position="595"/>
        <end position="600"/>
    </location>
</feature>
<feature type="transmembrane region" description="Helical; Name=9" evidence="3">
    <location>
        <begin position="601"/>
        <end position="621"/>
    </location>
</feature>
<feature type="topological domain" description="Cytoplasmic" evidence="6">
    <location>
        <begin position="622"/>
        <end position="644"/>
    </location>
</feature>
<feature type="short sequence motif" description="Endoplasmic reticulum export signal" evidence="2">
    <location>
        <begin position="633"/>
        <end position="638"/>
    </location>
</feature>
<feature type="short sequence motif" description="Golgi retention signal" evidence="2">
    <location>
        <begin position="642"/>
        <end position="644"/>
    </location>
</feature>
<reference key="1">
    <citation type="journal article" date="2000" name="Nature">
        <title>Sequence and analysis of chromosome 5 of the plant Arabidopsis thaliana.</title>
        <authorList>
            <person name="Tabata S."/>
            <person name="Kaneko T."/>
            <person name="Nakamura Y."/>
            <person name="Kotani H."/>
            <person name="Kato T."/>
            <person name="Asamizu E."/>
            <person name="Miyajima N."/>
            <person name="Sasamoto S."/>
            <person name="Kimura T."/>
            <person name="Hosouchi T."/>
            <person name="Kawashima K."/>
            <person name="Kohara M."/>
            <person name="Matsumoto M."/>
            <person name="Matsuno A."/>
            <person name="Muraki A."/>
            <person name="Nakayama S."/>
            <person name="Nakazaki N."/>
            <person name="Naruo K."/>
            <person name="Okumura S."/>
            <person name="Shinpo S."/>
            <person name="Takeuchi C."/>
            <person name="Wada T."/>
            <person name="Watanabe A."/>
            <person name="Yamada M."/>
            <person name="Yasuda M."/>
            <person name="Sato S."/>
            <person name="de la Bastide M."/>
            <person name="Huang E."/>
            <person name="Spiegel L."/>
            <person name="Gnoj L."/>
            <person name="O'Shaughnessy A."/>
            <person name="Preston R."/>
            <person name="Habermann K."/>
            <person name="Murray J."/>
            <person name="Johnson D."/>
            <person name="Rohlfing T."/>
            <person name="Nelson J."/>
            <person name="Stoneking T."/>
            <person name="Pepin K."/>
            <person name="Spieth J."/>
            <person name="Sekhon M."/>
            <person name="Armstrong J."/>
            <person name="Becker M."/>
            <person name="Belter E."/>
            <person name="Cordum H."/>
            <person name="Cordes M."/>
            <person name="Courtney L."/>
            <person name="Courtney W."/>
            <person name="Dante M."/>
            <person name="Du H."/>
            <person name="Edwards J."/>
            <person name="Fryman J."/>
            <person name="Haakensen B."/>
            <person name="Lamar E."/>
            <person name="Latreille P."/>
            <person name="Leonard S."/>
            <person name="Meyer R."/>
            <person name="Mulvaney E."/>
            <person name="Ozersky P."/>
            <person name="Riley A."/>
            <person name="Strowmatt C."/>
            <person name="Wagner-McPherson C."/>
            <person name="Wollam A."/>
            <person name="Yoakum M."/>
            <person name="Bell M."/>
            <person name="Dedhia N."/>
            <person name="Parnell L."/>
            <person name="Shah R."/>
            <person name="Rodriguez M."/>
            <person name="Hoon See L."/>
            <person name="Vil D."/>
            <person name="Baker J."/>
            <person name="Kirchoff K."/>
            <person name="Toth K."/>
            <person name="King L."/>
            <person name="Bahret A."/>
            <person name="Miller B."/>
            <person name="Marra M.A."/>
            <person name="Martienssen R."/>
            <person name="McCombie W.R."/>
            <person name="Wilson R.K."/>
            <person name="Murphy G."/>
            <person name="Bancroft I."/>
            <person name="Volckaert G."/>
            <person name="Wambutt R."/>
            <person name="Duesterhoeft A."/>
            <person name="Stiekema W."/>
            <person name="Pohl T."/>
            <person name="Entian K.-D."/>
            <person name="Terryn N."/>
            <person name="Hartley N."/>
            <person name="Bent E."/>
            <person name="Johnson S."/>
            <person name="Langham S.-A."/>
            <person name="McCullagh B."/>
            <person name="Robben J."/>
            <person name="Grymonprez B."/>
            <person name="Zimmermann W."/>
            <person name="Ramsperger U."/>
            <person name="Wedler H."/>
            <person name="Balke K."/>
            <person name="Wedler E."/>
            <person name="Peters S."/>
            <person name="van Staveren M."/>
            <person name="Dirkse W."/>
            <person name="Mooijman P."/>
            <person name="Klein Lankhorst R."/>
            <person name="Weitzenegger T."/>
            <person name="Bothe G."/>
            <person name="Rose M."/>
            <person name="Hauf J."/>
            <person name="Berneiser S."/>
            <person name="Hempel S."/>
            <person name="Feldpausch M."/>
            <person name="Lamberth S."/>
            <person name="Villarroel R."/>
            <person name="Gielen J."/>
            <person name="Ardiles W."/>
            <person name="Bents O."/>
            <person name="Lemcke K."/>
            <person name="Kolesov G."/>
            <person name="Mayer K.F.X."/>
            <person name="Rudd S."/>
            <person name="Schoof H."/>
            <person name="Schueller C."/>
            <person name="Zaccaria P."/>
            <person name="Mewes H.-W."/>
            <person name="Bevan M."/>
            <person name="Fransz P.F."/>
        </authorList>
    </citation>
    <scope>NUCLEOTIDE SEQUENCE [LARGE SCALE GENOMIC DNA]</scope>
    <source>
        <strain>cv. Columbia</strain>
    </source>
</reference>
<reference key="2">
    <citation type="journal article" date="2017" name="Plant J.">
        <title>Araport11: a complete reannotation of the Arabidopsis thaliana reference genome.</title>
        <authorList>
            <person name="Cheng C.Y."/>
            <person name="Krishnakumar V."/>
            <person name="Chan A.P."/>
            <person name="Thibaud-Nissen F."/>
            <person name="Schobel S."/>
            <person name="Town C.D."/>
        </authorList>
    </citation>
    <scope>GENOME REANNOTATION</scope>
    <source>
        <strain>cv. Columbia</strain>
    </source>
</reference>
<reference key="3">
    <citation type="journal article" date="2003" name="Science">
        <title>Empirical analysis of transcriptional activity in the Arabidopsis genome.</title>
        <authorList>
            <person name="Yamada K."/>
            <person name="Lim J."/>
            <person name="Dale J.M."/>
            <person name="Chen H."/>
            <person name="Shinn P."/>
            <person name="Palm C.J."/>
            <person name="Southwick A.M."/>
            <person name="Wu H.C."/>
            <person name="Kim C.J."/>
            <person name="Nguyen M."/>
            <person name="Pham P.K."/>
            <person name="Cheuk R.F."/>
            <person name="Karlin-Newmann G."/>
            <person name="Liu S.X."/>
            <person name="Lam B."/>
            <person name="Sakano H."/>
            <person name="Wu T."/>
            <person name="Yu G."/>
            <person name="Miranda M."/>
            <person name="Quach H.L."/>
            <person name="Tripp M."/>
            <person name="Chang C.H."/>
            <person name="Lee J.M."/>
            <person name="Toriumi M.J."/>
            <person name="Chan M.M."/>
            <person name="Tang C.C."/>
            <person name="Onodera C.S."/>
            <person name="Deng J.M."/>
            <person name="Akiyama K."/>
            <person name="Ansari Y."/>
            <person name="Arakawa T."/>
            <person name="Banh J."/>
            <person name="Banno F."/>
            <person name="Bowser L."/>
            <person name="Brooks S.Y."/>
            <person name="Carninci P."/>
            <person name="Chao Q."/>
            <person name="Choy N."/>
            <person name="Enju A."/>
            <person name="Goldsmith A.D."/>
            <person name="Gurjal M."/>
            <person name="Hansen N.F."/>
            <person name="Hayashizaki Y."/>
            <person name="Johnson-Hopson C."/>
            <person name="Hsuan V.W."/>
            <person name="Iida K."/>
            <person name="Karnes M."/>
            <person name="Khan S."/>
            <person name="Koesema E."/>
            <person name="Ishida J."/>
            <person name="Jiang P.X."/>
            <person name="Jones T."/>
            <person name="Kawai J."/>
            <person name="Kamiya A."/>
            <person name="Meyers C."/>
            <person name="Nakajima M."/>
            <person name="Narusaka M."/>
            <person name="Seki M."/>
            <person name="Sakurai T."/>
            <person name="Satou M."/>
            <person name="Tamse R."/>
            <person name="Vaysberg M."/>
            <person name="Wallender E.K."/>
            <person name="Wong C."/>
            <person name="Yamamura Y."/>
            <person name="Yuan S."/>
            <person name="Shinozaki K."/>
            <person name="Davis R.W."/>
            <person name="Theologis A."/>
            <person name="Ecker J.R."/>
        </authorList>
    </citation>
    <scope>NUCLEOTIDE SEQUENCE [LARGE SCALE MRNA]</scope>
    <source>
        <strain>cv. Columbia</strain>
    </source>
</reference>
<reference key="4">
    <citation type="journal article" date="2010" name="Physiol. Plantarum">
        <title>Transmembrane nine proteins in yeast and Arabidopsis affect cellular metal contents without changing vacuolar morphology.</title>
        <authorList>
            <person name="Hegelund J.N."/>
            <person name="Jahn T.P."/>
            <person name="Baekgaard L."/>
            <person name="Palmgren M.G."/>
            <person name="Schjoerring J.K."/>
        </authorList>
    </citation>
    <scope>GENE FAMILY</scope>
    <scope>NOMENCLATURE</scope>
</reference>
<reference key="5">
    <citation type="journal article" date="2012" name="Plant Cell">
        <title>The Golgi-localized Arabidopsis endomembrane protein12 contains both endoplasmic reticulum export and Golgi retention signals at its C terminus.</title>
        <authorList>
            <person name="Gao C."/>
            <person name="Yu C.K."/>
            <person name="Qu S."/>
            <person name="San M.W."/>
            <person name="Li K.Y."/>
            <person name="Lo S.W."/>
            <person name="Jiang L."/>
        </authorList>
    </citation>
    <scope>GENE FAMILY</scope>
    <scope>NOMENCLATURE</scope>
</reference>